<proteinExistence type="evidence at transcript level"/>
<organism>
    <name type="scientific">Lotus japonicus</name>
    <name type="common">Lotus corniculatus var. japonicus</name>
    <dbReference type="NCBI Taxonomy" id="34305"/>
    <lineage>
        <taxon>Eukaryota</taxon>
        <taxon>Viridiplantae</taxon>
        <taxon>Streptophyta</taxon>
        <taxon>Embryophyta</taxon>
        <taxon>Tracheophyta</taxon>
        <taxon>Spermatophyta</taxon>
        <taxon>Magnoliopsida</taxon>
        <taxon>eudicotyledons</taxon>
        <taxon>Gunneridae</taxon>
        <taxon>Pentapetalae</taxon>
        <taxon>rosids</taxon>
        <taxon>fabids</taxon>
        <taxon>Fabales</taxon>
        <taxon>Fabaceae</taxon>
        <taxon>Papilionoideae</taxon>
        <taxon>50 kb inversion clade</taxon>
        <taxon>NPAAA clade</taxon>
        <taxon>Hologalegina</taxon>
        <taxon>robinioid clade</taxon>
        <taxon>Loteae</taxon>
        <taxon>Lotus</taxon>
    </lineage>
</organism>
<feature type="signal peptide" evidence="2">
    <location>
        <begin position="1"/>
        <end position="22"/>
    </location>
</feature>
<feature type="chain" id="PRO_5002736790" description="Subtilisin-like serine-protease S" evidence="2">
    <location>
        <begin position="23"/>
        <end position="759"/>
    </location>
</feature>
<feature type="domain" description="Inhibitor I9" evidence="2">
    <location>
        <begin position="28"/>
        <end position="105"/>
    </location>
</feature>
<feature type="domain" description="Peptidase S8" evidence="4">
    <location>
        <begin position="110"/>
        <end position="613"/>
    </location>
</feature>
<feature type="domain" description="PA" evidence="2">
    <location>
        <begin position="390"/>
        <end position="462"/>
    </location>
</feature>
<feature type="active site" description="Charge relay system" evidence="4">
    <location>
        <position position="139"/>
    </location>
</feature>
<feature type="active site" description="Charge relay system" evidence="4">
    <location>
        <position position="215"/>
    </location>
</feature>
<feature type="active site" description="Charge relay system" evidence="4">
    <location>
        <position position="545"/>
    </location>
</feature>
<feature type="glycosylation site" description="N-linked (GlcNAc...) asparagine" evidence="3">
    <location>
        <position position="170"/>
    </location>
</feature>
<feature type="glycosylation site" description="N-linked (GlcNAc...) asparagine" evidence="3">
    <location>
        <position position="230"/>
    </location>
</feature>
<feature type="glycosylation site" description="N-linked (GlcNAc...) asparagine" evidence="3">
    <location>
        <position position="388"/>
    </location>
</feature>
<feature type="glycosylation site" description="N-linked (GlcNAc...) asparagine" evidence="3">
    <location>
        <position position="593"/>
    </location>
</feature>
<feature type="glycosylation site" description="N-linked (GlcNAc...) asparagine" evidence="3">
    <location>
        <position position="642"/>
    </location>
</feature>
<feature type="glycosylation site" description="N-linked (GlcNAc...) asparagine" evidence="3">
    <location>
        <position position="671"/>
    </location>
</feature>
<accession>A9JQS7</accession>
<name>SBTS_LOTJA</name>
<comment type="function">
    <text evidence="1">Required for arbuscular mycorrhiza (AM) development during AM symbiosis with AM fungi (e.g. Glomeromycota intraradices).</text>
</comment>
<comment type="subcellular location">
    <subcellularLocation>
        <location evidence="1">Secreted</location>
        <location evidence="1">Extracellular space</location>
        <location evidence="1">Apoplast</location>
    </subcellularLocation>
    <text evidence="1">Accumulates in the intercellular spaces and the periarbuscular space (PAS) during arbuscular mycorrhizal (AM) symbiosis.</text>
</comment>
<comment type="developmental stage">
    <text evidence="7">Accumulates in root cells that are adjacent to intra-radical fungal hyphae or in cells that harbor them during arbuscular mycorrhizal (AM) symbiosis, especially in epidermal and cortical cells (PubMed:19220794). Also induced transiently in roots epidermal cells (including root hair cells in nodule vicinity) during symbiosis with Rhizobia bacteria (e.g. Mesorhizobium loti), but not observed in nodules (PubMed:19220794).</text>
</comment>
<comment type="induction">
    <text evidence="6 7">Rapidly induced in roots during development of arbuscular mycorrhiza (AM) upon colonization by AM fungus (e.g. Glomeromycota intraradices) (PubMed:15980262, PubMed:19220794). Up-regulated transiently during root nodule symbiosis with Mesorhizobium loti (PubMed:15980262, PubMed:19220794).</text>
</comment>
<comment type="similarity">
    <text evidence="4">Belongs to the peptidase S8 family.</text>
</comment>
<dbReference type="EC" id="3.4.21.-" evidence="5"/>
<dbReference type="EMBL" id="AP006864">
    <property type="protein sequence ID" value="BAF95887.1"/>
    <property type="molecule type" value="Genomic_DNA"/>
</dbReference>
<dbReference type="SMR" id="A9JQS7"/>
<dbReference type="GlyCosmos" id="A9JQS7">
    <property type="glycosylation" value="6 sites, No reported glycans"/>
</dbReference>
<dbReference type="OMA" id="WFNLCND"/>
<dbReference type="OrthoDB" id="29072at2759"/>
<dbReference type="GO" id="GO:0048046">
    <property type="term" value="C:apoplast"/>
    <property type="evidence" value="ECO:0000250"/>
    <property type="project" value="UniProtKB"/>
</dbReference>
<dbReference type="GO" id="GO:0005615">
    <property type="term" value="C:extracellular space"/>
    <property type="evidence" value="ECO:0000250"/>
    <property type="project" value="UniProtKB"/>
</dbReference>
<dbReference type="GO" id="GO:0004252">
    <property type="term" value="F:serine-type endopeptidase activity"/>
    <property type="evidence" value="ECO:0007669"/>
    <property type="project" value="InterPro"/>
</dbReference>
<dbReference type="GO" id="GO:0036377">
    <property type="term" value="P:arbuscular mycorrhizal association"/>
    <property type="evidence" value="ECO:0000250"/>
    <property type="project" value="UniProtKB"/>
</dbReference>
<dbReference type="GO" id="GO:0006508">
    <property type="term" value="P:proteolysis"/>
    <property type="evidence" value="ECO:0007669"/>
    <property type="project" value="UniProtKB-KW"/>
</dbReference>
<dbReference type="GO" id="GO:0009609">
    <property type="term" value="P:response to symbiotic bacterium"/>
    <property type="evidence" value="ECO:0000270"/>
    <property type="project" value="UniProtKB"/>
</dbReference>
<dbReference type="GO" id="GO:0009610">
    <property type="term" value="P:response to symbiotic fungus"/>
    <property type="evidence" value="ECO:0000270"/>
    <property type="project" value="UniProtKB"/>
</dbReference>
<dbReference type="CDD" id="cd02120">
    <property type="entry name" value="PA_subtilisin_like"/>
    <property type="match status" value="1"/>
</dbReference>
<dbReference type="CDD" id="cd04852">
    <property type="entry name" value="Peptidases_S8_3"/>
    <property type="match status" value="1"/>
</dbReference>
<dbReference type="FunFam" id="3.40.50.200:FF:000006">
    <property type="entry name" value="Subtilisin-like protease SBT1.5"/>
    <property type="match status" value="1"/>
</dbReference>
<dbReference type="FunFam" id="3.30.70.80:FF:000002">
    <property type="entry name" value="Subtilisin-like protease SBT5.3"/>
    <property type="match status" value="1"/>
</dbReference>
<dbReference type="Gene3D" id="2.60.40.2310">
    <property type="match status" value="1"/>
</dbReference>
<dbReference type="Gene3D" id="3.50.30.30">
    <property type="match status" value="1"/>
</dbReference>
<dbReference type="Gene3D" id="3.30.70.80">
    <property type="entry name" value="Peptidase S8 propeptide/proteinase inhibitor I9"/>
    <property type="match status" value="1"/>
</dbReference>
<dbReference type="Gene3D" id="3.40.50.200">
    <property type="entry name" value="Peptidase S8/S53 domain"/>
    <property type="match status" value="1"/>
</dbReference>
<dbReference type="InterPro" id="IPR003137">
    <property type="entry name" value="PA_domain"/>
</dbReference>
<dbReference type="InterPro" id="IPR000209">
    <property type="entry name" value="Peptidase_S8/S53_dom"/>
</dbReference>
<dbReference type="InterPro" id="IPR036852">
    <property type="entry name" value="Peptidase_S8/S53_dom_sf"/>
</dbReference>
<dbReference type="InterPro" id="IPR023828">
    <property type="entry name" value="Peptidase_S8_Ser-AS"/>
</dbReference>
<dbReference type="InterPro" id="IPR015500">
    <property type="entry name" value="Peptidase_S8_subtilisin-rel"/>
</dbReference>
<dbReference type="InterPro" id="IPR034197">
    <property type="entry name" value="Peptidases_S8_3"/>
</dbReference>
<dbReference type="InterPro" id="IPR010259">
    <property type="entry name" value="S8pro/Inhibitor_I9"/>
</dbReference>
<dbReference type="InterPro" id="IPR037045">
    <property type="entry name" value="S8pro/Inhibitor_I9_sf"/>
</dbReference>
<dbReference type="InterPro" id="IPR045051">
    <property type="entry name" value="SBT"/>
</dbReference>
<dbReference type="InterPro" id="IPR041469">
    <property type="entry name" value="Subtilisin-like_FN3"/>
</dbReference>
<dbReference type="PANTHER" id="PTHR10795">
    <property type="entry name" value="PROPROTEIN CONVERTASE SUBTILISIN/KEXIN"/>
    <property type="match status" value="1"/>
</dbReference>
<dbReference type="Pfam" id="PF17766">
    <property type="entry name" value="fn3_6"/>
    <property type="match status" value="1"/>
</dbReference>
<dbReference type="Pfam" id="PF05922">
    <property type="entry name" value="Inhibitor_I9"/>
    <property type="match status" value="1"/>
</dbReference>
<dbReference type="Pfam" id="PF02225">
    <property type="entry name" value="PA"/>
    <property type="match status" value="1"/>
</dbReference>
<dbReference type="Pfam" id="PF00082">
    <property type="entry name" value="Peptidase_S8"/>
    <property type="match status" value="1"/>
</dbReference>
<dbReference type="PRINTS" id="PR00723">
    <property type="entry name" value="SUBTILISIN"/>
</dbReference>
<dbReference type="SUPFAM" id="SSF52743">
    <property type="entry name" value="Subtilisin-like"/>
    <property type="match status" value="1"/>
</dbReference>
<dbReference type="PROSITE" id="PS51892">
    <property type="entry name" value="SUBTILASE"/>
    <property type="match status" value="1"/>
</dbReference>
<dbReference type="PROSITE" id="PS00138">
    <property type="entry name" value="SUBTILASE_SER"/>
    <property type="match status" value="1"/>
</dbReference>
<evidence type="ECO:0000250" key="1">
    <source>
        <dbReference type="UniProtKB" id="A9QY40"/>
    </source>
</evidence>
<evidence type="ECO:0000255" key="2"/>
<evidence type="ECO:0000255" key="3">
    <source>
        <dbReference type="PROSITE-ProRule" id="PRU00498"/>
    </source>
</evidence>
<evidence type="ECO:0000255" key="4">
    <source>
        <dbReference type="PROSITE-ProRule" id="PRU01240"/>
    </source>
</evidence>
<evidence type="ECO:0000255" key="5">
    <source>
        <dbReference type="PROSITE-ProRule" id="PRU10080"/>
    </source>
</evidence>
<evidence type="ECO:0000269" key="6">
    <source>
    </source>
</evidence>
<evidence type="ECO:0000269" key="7">
    <source>
    </source>
</evidence>
<evidence type="ECO:0000303" key="8">
    <source>
    </source>
</evidence>
<keyword id="KW-0052">Apoplast</keyword>
<keyword id="KW-0325">Glycoprotein</keyword>
<keyword id="KW-0378">Hydrolase</keyword>
<keyword id="KW-0645">Protease</keyword>
<keyword id="KW-0964">Secreted</keyword>
<keyword id="KW-0720">Serine protease</keyword>
<keyword id="KW-0732">Signal</keyword>
<gene>
    <name evidence="8" type="primary">SbtS</name>
</gene>
<reference key="1">
    <citation type="journal article" date="2008" name="DNA Res.">
        <title>Genome structure of the legume, Lotus japonicus.</title>
        <authorList>
            <person name="Sato S."/>
            <person name="Nakamura Y."/>
            <person name="Kaneko T."/>
            <person name="Asamizu E."/>
            <person name="Kato T."/>
            <person name="Nakao M."/>
            <person name="Sasamoto S."/>
            <person name="Watanabe A."/>
            <person name="Ono A."/>
            <person name="Kawashima K."/>
            <person name="Fujishiro T."/>
            <person name="Katoh M."/>
            <person name="Kohara M."/>
            <person name="Kishida Y."/>
            <person name="Minami C."/>
            <person name="Nakayama S."/>
            <person name="Nakazaki N."/>
            <person name="Shimizu Y."/>
            <person name="Shinpo S."/>
            <person name="Takahashi C."/>
            <person name="Wada T."/>
            <person name="Yamada M."/>
            <person name="Ohmido N."/>
            <person name="Hayashi M."/>
            <person name="Fukui K."/>
            <person name="Baba T."/>
            <person name="Nakamichi T."/>
            <person name="Mori H."/>
            <person name="Tabata S."/>
        </authorList>
    </citation>
    <scope>NUCLEOTIDE SEQUENCE [GENOMIC DNA]</scope>
</reference>
<reference key="2">
    <citation type="journal article" date="2005" name="Plant Cell">
        <title>Seven Lotus japonicus genes required for transcriptional reprogramming of the root during fungal and bacterial symbiosis.</title>
        <authorList>
            <person name="Kistner C."/>
            <person name="Winzer T."/>
            <person name="Pitzschke A."/>
            <person name="Mulder L."/>
            <person name="Sato S."/>
            <person name="Kaneko T."/>
            <person name="Tabata S."/>
            <person name="Sandal N."/>
            <person name="Stougaard J."/>
            <person name="Webb K.J."/>
            <person name="Szczyglowski K."/>
            <person name="Parniske M."/>
        </authorList>
    </citation>
    <scope>INDUCTION BY GLOMEROMYCOTA INTRARADICES AND MESORHIZOBIUM LOTI</scope>
</reference>
<reference key="3">
    <citation type="journal article" date="2009" name="Plant J.">
        <title>Apoplastic plant subtilases support arbuscular mycorrhiza development in Lotus japonicus.</title>
        <authorList>
            <person name="Takeda N."/>
            <person name="Sato S."/>
            <person name="Asamizu E."/>
            <person name="Tabata S."/>
            <person name="Parniske M."/>
        </authorList>
    </citation>
    <scope>INDUCTION BY GLOMEROMYCOTA INTRARADICES AND MESORHIZOBIUM LOTI</scope>
    <scope>DEVELOPMENTAL STAGE</scope>
    <source>
        <strain>cv. Gifu / B-129</strain>
        <strain>cv. Miyakojima MG-20</strain>
    </source>
</reference>
<protein>
    <recommendedName>
        <fullName evidence="8">Subtilisin-like serine-protease S</fullName>
        <shortName evidence="8">SbtS</shortName>
        <shortName evidence="8">Subtilase S</shortName>
        <ecNumber evidence="5">3.4.21.-</ecNumber>
    </recommendedName>
</protein>
<sequence>MGSAKILSFTLLLFVGYTLVHGSTPKHYIVYMGDRSHPNSESVVRANHEILASVTGSLNDAKAAAIHHYSRSFQGFSAMITPEQAKKLADHNSVVSVFESKMNKLHTTHSWDFLGLDTVYKNNPSALDSASNVIVGVIDSGVWPESESFNDYGLGPVPEKFKGECVTGDNFTLANCNKKIIGARFYSKGLEAEIGPLENIVDSIFFRSPRDSDGHGTHTASTIAGSIVSNVSLFGMAKGTARGGAPSARLSIYKACWFGFCSDADVFAAMDDAIHDGVDILSLSLGPDPPQPLYFENAISVGAFHAFQKGILVSASAGNSVFPRTACNVAPWIFTVAASTVDREFRSDIYLGNSKVLKGLSLNPIKMEGSYGLIYGSAAAAAGDAALNASFCKEHTLDPTLIKGKIVICTVEKFTDNRREKAIIIKQGGGVGMILIDHNARDVGFQFVIPSTMIGQDAVEELQAYMKTEKNPTATIFPTLTLVGTKPAPESAAFSSVGPNIITPDIIKPDITGPGVNILAAWSPVATEATVEQKSVNYNIISGTSMSCPHISAISAIIKSHHPSWSPAAIMSAIMTSATVMDNTHSLIGRDPNGTQATPFDYGSGHVNPVASLNPGLVYDFSSQDVLNFLCSNGASPAQLKNLTGELTQCQKSPTASYNFNYPSIGVSNLNGSLSVYRTVTYYGQEPTEYFASVERPSGVIVRVTPAKLKFWKAGEKITFRIDFTPFKNSNGNFVFGALTWNNGKQRVRSPIGLNVLST</sequence>